<protein>
    <recommendedName>
        <fullName>Cytochrome c oxidase subunit 3</fullName>
        <ecNumber>7.1.1.9</ecNumber>
    </recommendedName>
    <alternativeName>
        <fullName>Cytochrome c oxidase polypeptide III</fullName>
    </alternativeName>
</protein>
<reference key="1">
    <citation type="journal article" date="1981" name="Nature">
        <title>Sequence and organization of the human mitochondrial genome.</title>
        <authorList>
            <person name="Anderson S."/>
            <person name="Bankier A.T."/>
            <person name="Barrell B.G."/>
            <person name="de Bruijn M.H.L."/>
            <person name="Coulson A.R."/>
            <person name="Drouin J."/>
            <person name="Eperon I.C."/>
            <person name="Nierlich D.P."/>
            <person name="Roe B.A."/>
            <person name="Sanger F."/>
            <person name="Schreier P.H."/>
            <person name="Smith A.J.H."/>
            <person name="Staden R."/>
            <person name="Young I.G."/>
        </authorList>
    </citation>
    <scope>NUCLEOTIDE SEQUENCE [LARGE SCALE GENOMIC DNA]</scope>
</reference>
<reference key="2">
    <citation type="submission" date="1997-04" db="EMBL/GenBank/DDBJ databases">
        <authorList>
            <person name="Kogelnik A."/>
            <person name="Brown M."/>
        </authorList>
    </citation>
    <scope>SEQUENCE REVISION TO 118</scope>
</reference>
<reference key="3">
    <citation type="journal article" date="2006" name="BMC Genomics">
        <title>In situ origin of deep rooting lineages of mitochondrial Macrohaplogroup 'M' in India.</title>
        <authorList>
            <person name="Thangaraj K."/>
            <person name="Chaubey G."/>
            <person name="Singh V.K."/>
            <person name="Vanniarajan A."/>
            <person name="Thanseem I."/>
            <person name="Reddy A.G."/>
            <person name="Singh L."/>
        </authorList>
    </citation>
    <scope>NUCLEOTIDE SEQUENCE [GENOMIC DNA] OF 1-31</scope>
</reference>
<reference key="4">
    <citation type="submission" date="1997-07" db="EMBL/GenBank/DDBJ databases">
        <authorList>
            <person name="Swanson K.V."/>
            <person name="Griffiss J."/>
        </authorList>
    </citation>
    <scope>NUCLEOTIDE SEQUENCE [GENOMIC DNA] OF 167-261</scope>
    <source>
        <tissue>Endometrial adenocarcinoma</tissue>
    </source>
</reference>
<reference key="5">
    <citation type="journal article" date="2015" name="Proteomics">
        <title>N-terminome analysis of the human mitochondrial proteome.</title>
        <authorList>
            <person name="Vaca Jacome A.S."/>
            <person name="Rabilloud T."/>
            <person name="Schaeffer-Reiss C."/>
            <person name="Rompais M."/>
            <person name="Ayoub D."/>
            <person name="Lane L."/>
            <person name="Bairoch A."/>
            <person name="Van Dorsselaer A."/>
            <person name="Carapito C."/>
        </authorList>
    </citation>
    <scope>IDENTIFICATION BY MASS SPECTROMETRY [LARGE SCALE ANALYSIS]</scope>
</reference>
<reference key="6">
    <citation type="journal article" date="2017" name="Cell">
        <title>Architecture of human mitochondrial respiratory megacomplex I2III2IV2.</title>
        <authorList>
            <person name="Guo R."/>
            <person name="Zong S."/>
            <person name="Wu M."/>
            <person name="Gu J."/>
            <person name="Yang M."/>
        </authorList>
    </citation>
    <scope>STRUCTURE BY ELECTRON MICROSCOPY (3.90 ANGSTROMS)</scope>
    <scope>SUBUNIT</scope>
</reference>
<reference key="7">
    <citation type="journal article" date="2018" name="Cell Res.">
        <title>Structure of the intact 14-subunit human cytochrome c oxidase.</title>
        <authorList>
            <person name="Zong S."/>
            <person name="Wu M."/>
            <person name="Gu J."/>
            <person name="Liu T."/>
            <person name="Guo R."/>
            <person name="Yang M."/>
        </authorList>
    </citation>
    <scope>STRUCTURE BY ELECTRON MICROSCOPY (3.60 ANGSTROMS) OF 2-261</scope>
</reference>
<reference key="8">
    <citation type="journal article" date="2008" name="Exp. Mol. Med.">
        <title>A MELAS syndrome family harboring two mutations in mitochondrial genome.</title>
        <authorList>
            <person name="Choi B.O."/>
            <person name="Hwang J.H."/>
            <person name="Kim J."/>
            <person name="Cho E.M."/>
            <person name="Cho S.Y."/>
            <person name="Hwang S.J."/>
            <person name="Lee H.W."/>
            <person name="Kim S.J."/>
            <person name="Chung K.W."/>
        </authorList>
    </citation>
    <scope>VARIANT LEU-251</scope>
</reference>
<reference key="9">
    <citation type="journal article" date="1991" name="Hum. Genet.">
        <title>Normal variants of human mitochondrial DNA and translation products: the building of a reference data base.</title>
        <authorList>
            <person name="Marzuki S."/>
            <person name="Noer A.S."/>
            <person name="Lertrit P."/>
            <person name="Thyagarajan D."/>
            <person name="Kapsa R."/>
            <person name="Utthanaphol P."/>
            <person name="Byrne E."/>
        </authorList>
    </citation>
    <scope>VARIANTS ILE-91; ARG-177 AND ILE-254</scope>
</reference>
<reference key="10">
    <citation type="journal article" date="1993" name="Biochem. Biophys. Res. Commun.">
        <title>Cytochrome c oxidase mutations in Leber hereditary optic neuropathy.</title>
        <authorList>
            <person name="Johns D.R."/>
            <person name="Neufeld M.J."/>
        </authorList>
    </citation>
    <scope>VARIANTS LHON SER-78 AND THR-200</scope>
</reference>
<reference key="11">
    <citation type="journal article" date="1995" name="Neuromuscul. Disord.">
        <title>A new mutation associated with MELAS is located in a mitochondrial DNA polypeptide-coding gene.</title>
        <authorList>
            <person name="Manfredi G."/>
            <person name="Schon E.A."/>
            <person name="Moraes C.T."/>
            <person name="Bonilla E."/>
            <person name="Berry G.T."/>
            <person name="Sladky J.T."/>
            <person name="Dimauro S."/>
        </authorList>
    </citation>
    <scope>VARIANT LEU-251</scope>
</reference>
<reference key="12">
    <citation type="journal article" date="1996" name="Nat. Genet.">
        <title>A microdeletion in cytochrome c oxidase (COX) subunit III associated with COX deficiency and recurrent myoglobinuria.</title>
        <authorList>
            <person name="Keightley J.A."/>
            <person name="Hoffbuhr K.C."/>
            <person name="Burton M.D."/>
            <person name="Salas V.M."/>
            <person name="Johnston W.S.W."/>
            <person name="Penn A.M.W."/>
            <person name="Buist N.R.M."/>
            <person name="Kennaway N.G."/>
        </authorList>
    </citation>
    <scope>VARIANT MT-C4D 94-PHE--PHE-98 DEL</scope>
    <scope>INVOLVEMENT IN RM-MT</scope>
</reference>
<reference key="13">
    <citation type="journal article" date="1998" name="Nucleic Acids Res.">
        <title>Automating the identification of DNA variations using quality-based fluorescence re-sequencing: analysis of the human mitochondrial genome.</title>
        <authorList>
            <person name="Rieder M.J."/>
            <person name="Taylor S.L."/>
            <person name="Tobe V.O."/>
            <person name="Nickerson D.A."/>
        </authorList>
    </citation>
    <scope>VARIANTS ARG-3 AND SER-35</scope>
</reference>
<comment type="function">
    <text evidence="2">Component of the cytochrome c oxidase, the last enzyme in the mitochondrial electron transport chain which drives oxidative phosphorylation. The respiratory chain contains 3 multisubunit complexes succinate dehydrogenase (complex II, CII), ubiquinol-cytochrome c oxidoreductase (cytochrome b-c1 complex, complex III, CIII) and cytochrome c oxidase (complex IV, CIV), that cooperate to transfer electrons derived from NADH and succinate to molecular oxygen, creating an electrochemical gradient over the inner membrane that drives transmembrane transport and the ATP synthase. Cytochrome c oxidase is the component of the respiratory chain that catalyzes the reduction of oxygen to water. Electrons originating from reduced cytochrome c in the intermembrane space (IMS) are transferred via the dinuclear copper A center (CU(A)) of subunit 2 and heme A of subunit 1 to the active site in subunit 1, a binuclear center (BNC) formed by heme A3 and copper B (CU(B)). The BNC reduces molecular oxygen to 2 water molecules using 4 electrons from cytochrome c in the IMS and 4 protons from the mitochondrial matrix.</text>
</comment>
<comment type="catalytic activity">
    <reaction evidence="2">
        <text>4 Fe(II)-[cytochrome c] + O2 + 8 H(+)(in) = 4 Fe(III)-[cytochrome c] + 2 H2O + 4 H(+)(out)</text>
        <dbReference type="Rhea" id="RHEA:11436"/>
        <dbReference type="Rhea" id="RHEA-COMP:10350"/>
        <dbReference type="Rhea" id="RHEA-COMP:14399"/>
        <dbReference type="ChEBI" id="CHEBI:15377"/>
        <dbReference type="ChEBI" id="CHEBI:15378"/>
        <dbReference type="ChEBI" id="CHEBI:15379"/>
        <dbReference type="ChEBI" id="CHEBI:29033"/>
        <dbReference type="ChEBI" id="CHEBI:29034"/>
        <dbReference type="EC" id="7.1.1.9"/>
    </reaction>
    <physiologicalReaction direction="left-to-right" evidence="2">
        <dbReference type="Rhea" id="RHEA:11437"/>
    </physiologicalReaction>
</comment>
<comment type="subunit">
    <text evidence="5 6">Component of the cytochrome c oxidase (complex IV, CIV), a multisubunit enzyme composed of 14 subunits. The complex is composed of a catalytic core of 3 subunits MT-CO1, MT-CO2 and MT-CO3, encoded in the mitochondrial DNA, and 11 supernumerary subunits COX4I1 (or COX4I2), COX5A, COX5B, COX6A1 (or COX6A2), COX6B1 (or COX6B2), COX6C, COX7A2 (or COX7A1), COX7B, COX7C, COX8A and NDUFA4, which are encoded in the nuclear genome (PubMed:30030519). The complex exists as a monomer or a dimer and forms supercomplexes (SCs) in the inner mitochondrial membrane with NADH-ubiquinone oxidoreductase (complex I, CI) and ubiquinol-cytochrome c oxidoreductase (cytochrome b-c1 complex, complex III, CIII), resulting in different assemblies (supercomplex SCI(1)III(2)IV(1) and megacomplex MCI(2)III(2)IV(2)) (PubMed:28844695).</text>
</comment>
<comment type="interaction">
    <interactant intactId="EBI-3932264">
        <id>P00414</id>
    </interactant>
    <interactant intactId="EBI-985879">
        <id>P37840</id>
        <label>SNCA</label>
    </interactant>
    <organismsDiffer>false</organismsDiffer>
    <experiments>3</experiments>
</comment>
<comment type="subcellular location">
    <subcellularLocation>
        <location evidence="6">Mitochondrion inner membrane</location>
        <topology evidence="6">Multi-pass membrane protein</topology>
    </subcellularLocation>
</comment>
<comment type="disease" evidence="8">
    <disease id="DI-00640">
        <name>Leber hereditary optic neuropathy</name>
        <acronym>LHON</acronym>
        <description>A maternally inherited form of Leber hereditary optic neuropathy, a mitochondrial disease resulting in bilateral painless loss of central vision due to selective degeneration of the retinal ganglion cells and their axons. The disorder shows incomplete penetrance and male predominance. Cardiac conduction defects and neurological defects have also been described in some LHON patients. LHON results from primary mitochondrial DNA mutations affecting the respiratory chain complexes.</description>
        <dbReference type="MIM" id="535000"/>
    </disease>
    <text>The disease is caused by variants affecting the gene represented in this entry.</text>
</comment>
<comment type="disease" evidence="9">
    <disease id="DI-01469">
        <name>Mitochondrial complex IV deficiency</name>
        <acronym>MT-C4D</acronym>
        <description>A disorder of the mitochondrial respiratory chain with heterogeneous clinical manifestations, ranging from isolated myopathy to severe multisystem disease affecting several tissues and organs. Features include hypertrophic cardiomyopathy, hepatomegaly and liver dysfunction, hypotonia, muscle weakness, exercise intolerance, developmental delay, delayed motor development and intellectual disability. Some affected individuals manifest a fatal hypertrophic cardiomyopathy resulting in neonatal death. A subset of patients manifest Leigh syndrome.</description>
        <dbReference type="MIM" id="220110"/>
    </disease>
    <text>The disease is caused by variants affecting the gene represented in this entry.</text>
</comment>
<comment type="disease" evidence="9">
    <disease id="DI-02775">
        <name>Recurrent myoglobinuria mitochondrial</name>
        <acronym>RM-MT</acronym>
        <description>Recurrent myoglobinuria is characterized by recurrent attacks of rhabdomyolysis (necrosis or disintegration of skeletal muscle) associated with muscle pain and weakness, and followed by excretion of myoglobin in the urine.</description>
        <dbReference type="MIM" id="550500"/>
    </disease>
    <text>The gene represented in this entry may be involved in disease pathogenesis.</text>
</comment>
<comment type="similarity">
    <text evidence="11">Belongs to the cytochrome c oxidase subunit 3 family.</text>
</comment>
<sequence>MTHQSHAYHMVKPSPWPLTGALSALLMTSGLAMWFHFHSMTLLMLGLLTNTLTMYQWWRDVTRESTYQGHHTPPVQKGLRYGMILFITSEVFFFAGFFWAFYHSSLAPTPQLGGHWPPTGITPLNPLEVPLLNTSVLLASGVSITWAHHSLMENNRNQMIQALLITILLGLYFTLLQASEYFESPFTISDGIYGSTFFVATGFHGLHVIIGSTFLTICFIRQLMFHFTSKHHFGFEAAAWYWHFVDVVWLFLYVSIYWWGS</sequence>
<keyword id="KW-0002">3D-structure</keyword>
<keyword id="KW-0225">Disease variant</keyword>
<keyword id="KW-0429">Leber hereditary optic neuropathy</keyword>
<keyword id="KW-0472">Membrane</keyword>
<keyword id="KW-0496">Mitochondrion</keyword>
<keyword id="KW-0999">Mitochondrion inner membrane</keyword>
<keyword id="KW-1274">Primary mitochondrial disease</keyword>
<keyword id="KW-1267">Proteomics identification</keyword>
<keyword id="KW-1185">Reference proteome</keyword>
<keyword id="KW-1278">Translocase</keyword>
<keyword id="KW-0812">Transmembrane</keyword>
<keyword id="KW-1133">Transmembrane helix</keyword>
<name>COX3_HUMAN</name>
<accession>P00414</accession>
<accession>Q14Y83</accession>
<geneLocation type="mitochondrion"/>
<proteinExistence type="evidence at protein level"/>
<feature type="chain" id="PRO_0000183793" description="Cytochrome c oxidase subunit 3">
    <location>
        <begin position="1"/>
        <end position="261"/>
    </location>
</feature>
<feature type="topological domain" description="Mitochondrial matrix" evidence="6">
    <location>
        <begin position="1"/>
        <end position="15"/>
    </location>
</feature>
<feature type="transmembrane region" description="Helical; Name=I" evidence="1">
    <location>
        <begin position="16"/>
        <end position="34"/>
    </location>
</feature>
<feature type="topological domain" description="Mitochondrial intermembrane" evidence="6">
    <location>
        <begin position="35"/>
        <end position="40"/>
    </location>
</feature>
<feature type="transmembrane region" description="Helical; Name=II" evidence="1">
    <location>
        <begin position="41"/>
        <end position="66"/>
    </location>
</feature>
<feature type="topological domain" description="Mitochondrial matrix" evidence="6">
    <location>
        <begin position="67"/>
        <end position="72"/>
    </location>
</feature>
<feature type="transmembrane region" description="Helical; Name=III" evidence="1">
    <location>
        <begin position="73"/>
        <end position="105"/>
    </location>
</feature>
<feature type="topological domain" description="Mitochondrial intermembrane" evidence="6">
    <location>
        <begin position="106"/>
        <end position="128"/>
    </location>
</feature>
<feature type="transmembrane region" description="Helical; Name=IV" evidence="1">
    <location>
        <begin position="129"/>
        <end position="152"/>
    </location>
</feature>
<feature type="topological domain" description="Mitochondrial matrix" evidence="6">
    <location>
        <begin position="153"/>
        <end position="155"/>
    </location>
</feature>
<feature type="transmembrane region" description="Helical; Name=V" evidence="1">
    <location>
        <begin position="156"/>
        <end position="183"/>
    </location>
</feature>
<feature type="topological domain" description="Mitochondrial intermembrane" evidence="6">
    <location>
        <begin position="184"/>
        <end position="190"/>
    </location>
</feature>
<feature type="transmembrane region" description="Helical; Name=VI" evidence="1">
    <location>
        <begin position="191"/>
        <end position="223"/>
    </location>
</feature>
<feature type="topological domain" description="Mitochondrial matrix" evidence="6">
    <location>
        <begin position="224"/>
        <end position="232"/>
    </location>
</feature>
<feature type="transmembrane region" description="Helical; Name=VII" evidence="1">
    <location>
        <begin position="233"/>
        <end position="256"/>
    </location>
</feature>
<feature type="topological domain" description="Mitochondrial intermembrane" evidence="6">
    <location>
        <begin position="257"/>
        <end position="261"/>
    </location>
</feature>
<feature type="sequence variant" id="VAR_008573" description="In dbSNP:rs1556423637." evidence="10">
    <original>H</original>
    <variation>R</variation>
    <location>
        <position position="3"/>
    </location>
</feature>
<feature type="sequence variant" id="VAR_008574" evidence="10">
    <original>F</original>
    <variation>S</variation>
    <location>
        <position position="35"/>
    </location>
</feature>
<feature type="sequence variant" id="VAR_002167" description="In LHON; secondary mutation; does not seem to directly cause the disease; dbSNP:rs267606611." evidence="8">
    <original>G</original>
    <variation>S</variation>
    <location>
        <position position="78"/>
    </location>
</feature>
<feature type="sequence variant" id="VAR_008575" description="In dbSNP:rs2853825." evidence="3">
    <original>V</original>
    <variation>I</variation>
    <location>
        <position position="91"/>
    </location>
</feature>
<feature type="sequence variant" id="VAR_033057" description="In MT-C4D; with RM-MT." evidence="9">
    <location>
        <begin position="94"/>
        <end position="98"/>
    </location>
</feature>
<feature type="sequence variant" id="VAR_008576" evidence="3">
    <original>Q</original>
    <variation>R</variation>
    <location>
        <position position="177"/>
    </location>
</feature>
<feature type="sequence variant" id="VAR_002168" description="In LHON; possible rare primary mutation; dbSNP:rs200613617." evidence="8">
    <original>A</original>
    <variation>T</variation>
    <location>
        <position position="200"/>
    </location>
</feature>
<feature type="sequence variant" id="VAR_002169" description="Found in two patients with a diagnosis of mitochondrial encephalomyopathy with lactic acidosis and stroke-like episodes syndrome; uncertain significance; dbSNP:rs1556423753." evidence="4 7">
    <original>F</original>
    <variation>L</variation>
    <location>
        <position position="251"/>
    </location>
</feature>
<feature type="sequence variant" id="VAR_008577" description="In dbSNP:rs200809063." evidence="3">
    <original>V</original>
    <variation>I</variation>
    <location>
        <position position="254"/>
    </location>
</feature>
<feature type="sequence conflict" description="In Ref. 1; CAA24032." evidence="11" ref="1">
    <original>P</original>
    <variation>R</variation>
    <location>
        <position position="118"/>
    </location>
</feature>
<evidence type="ECO:0000250" key="1">
    <source>
        <dbReference type="UniProtKB" id="P00415"/>
    </source>
</evidence>
<evidence type="ECO:0000250" key="2">
    <source>
        <dbReference type="UniProtKB" id="P00420"/>
    </source>
</evidence>
<evidence type="ECO:0000269" key="3">
    <source>
    </source>
</evidence>
<evidence type="ECO:0000269" key="4">
    <source>
    </source>
</evidence>
<evidence type="ECO:0000269" key="5">
    <source>
    </source>
</evidence>
<evidence type="ECO:0000269" key="6">
    <source>
    </source>
</evidence>
<evidence type="ECO:0000269" key="7">
    <source>
    </source>
</evidence>
<evidence type="ECO:0000269" key="8">
    <source>
    </source>
</evidence>
<evidence type="ECO:0000269" key="9">
    <source>
    </source>
</evidence>
<evidence type="ECO:0000269" key="10">
    <source>
    </source>
</evidence>
<evidence type="ECO:0000305" key="11"/>
<organism>
    <name type="scientific">Homo sapiens</name>
    <name type="common">Human</name>
    <dbReference type="NCBI Taxonomy" id="9606"/>
    <lineage>
        <taxon>Eukaryota</taxon>
        <taxon>Metazoa</taxon>
        <taxon>Chordata</taxon>
        <taxon>Craniata</taxon>
        <taxon>Vertebrata</taxon>
        <taxon>Euteleostomi</taxon>
        <taxon>Mammalia</taxon>
        <taxon>Eutheria</taxon>
        <taxon>Euarchontoglires</taxon>
        <taxon>Primates</taxon>
        <taxon>Haplorrhini</taxon>
        <taxon>Catarrhini</taxon>
        <taxon>Hominidae</taxon>
        <taxon>Homo</taxon>
    </lineage>
</organism>
<dbReference type="EC" id="7.1.1.9"/>
<dbReference type="EMBL" id="J01415">
    <property type="protein sequence ID" value="AAB58949.2"/>
    <property type="molecule type" value="Genomic_DNA"/>
</dbReference>
<dbReference type="EMBL" id="V00662">
    <property type="protein sequence ID" value="CAA24032.1"/>
    <property type="molecule type" value="Genomic_DNA"/>
</dbReference>
<dbReference type="EMBL" id="DQ654394">
    <property type="protein sequence ID" value="ABG27956.1"/>
    <property type="molecule type" value="Genomic_DNA"/>
</dbReference>
<dbReference type="EMBL" id="DQ654395">
    <property type="protein sequence ID" value="ABG27958.1"/>
    <property type="molecule type" value="Genomic_DNA"/>
</dbReference>
<dbReference type="EMBL" id="DQ654396">
    <property type="protein sequence ID" value="ABG27960.1"/>
    <property type="molecule type" value="Genomic_DNA"/>
</dbReference>
<dbReference type="EMBL" id="DQ654397">
    <property type="protein sequence ID" value="ABG27962.1"/>
    <property type="molecule type" value="Genomic_DNA"/>
</dbReference>
<dbReference type="EMBL" id="DQ654398">
    <property type="protein sequence ID" value="ABG27964.1"/>
    <property type="molecule type" value="Genomic_DNA"/>
</dbReference>
<dbReference type="EMBL" id="DQ654399">
    <property type="protein sequence ID" value="ABG27966.1"/>
    <property type="molecule type" value="Genomic_DNA"/>
</dbReference>
<dbReference type="EMBL" id="DQ654400">
    <property type="protein sequence ID" value="ABG27968.1"/>
    <property type="molecule type" value="Genomic_DNA"/>
</dbReference>
<dbReference type="EMBL" id="DQ654401">
    <property type="protein sequence ID" value="ABG27970.1"/>
    <property type="molecule type" value="Genomic_DNA"/>
</dbReference>
<dbReference type="EMBL" id="DQ654402">
    <property type="protein sequence ID" value="ABG27972.1"/>
    <property type="molecule type" value="Genomic_DNA"/>
</dbReference>
<dbReference type="EMBL" id="DQ654403">
    <property type="protein sequence ID" value="ABG27974.1"/>
    <property type="molecule type" value="Genomic_DNA"/>
</dbReference>
<dbReference type="EMBL" id="DQ654404">
    <property type="protein sequence ID" value="ABG27976.1"/>
    <property type="molecule type" value="Genomic_DNA"/>
</dbReference>
<dbReference type="EMBL" id="DQ654405">
    <property type="protein sequence ID" value="ABG27978.1"/>
    <property type="molecule type" value="Genomic_DNA"/>
</dbReference>
<dbReference type="EMBL" id="DQ654406">
    <property type="protein sequence ID" value="ABG27980.1"/>
    <property type="molecule type" value="Genomic_DNA"/>
</dbReference>
<dbReference type="EMBL" id="DQ654407">
    <property type="protein sequence ID" value="ABG27982.1"/>
    <property type="molecule type" value="Genomic_DNA"/>
</dbReference>
<dbReference type="EMBL" id="DQ654408">
    <property type="protein sequence ID" value="ABG27984.1"/>
    <property type="molecule type" value="Genomic_DNA"/>
</dbReference>
<dbReference type="EMBL" id="DQ654409">
    <property type="protein sequence ID" value="ABG27986.1"/>
    <property type="molecule type" value="Genomic_DNA"/>
</dbReference>
<dbReference type="EMBL" id="DQ654410">
    <property type="protein sequence ID" value="ABG27988.1"/>
    <property type="molecule type" value="Genomic_DNA"/>
</dbReference>
<dbReference type="EMBL" id="DQ654411">
    <property type="protein sequence ID" value="ABG27990.1"/>
    <property type="molecule type" value="Genomic_DNA"/>
</dbReference>
<dbReference type="EMBL" id="DQ654412">
    <property type="protein sequence ID" value="ABG27992.1"/>
    <property type="molecule type" value="Genomic_DNA"/>
</dbReference>
<dbReference type="EMBL" id="DQ654413">
    <property type="protein sequence ID" value="ABG27994.1"/>
    <property type="molecule type" value="Genomic_DNA"/>
</dbReference>
<dbReference type="EMBL" id="DQ654414">
    <property type="protein sequence ID" value="ABG27996.1"/>
    <property type="molecule type" value="Genomic_DNA"/>
</dbReference>
<dbReference type="EMBL" id="DQ654415">
    <property type="protein sequence ID" value="ABG27998.1"/>
    <property type="molecule type" value="Genomic_DNA"/>
</dbReference>
<dbReference type="EMBL" id="DQ654416">
    <property type="protein sequence ID" value="ABG28000.1"/>
    <property type="molecule type" value="Genomic_DNA"/>
</dbReference>
<dbReference type="EMBL" id="DQ654417">
    <property type="protein sequence ID" value="ABG28002.1"/>
    <property type="molecule type" value="Genomic_DNA"/>
</dbReference>
<dbReference type="EMBL" id="DQ654418">
    <property type="protein sequence ID" value="ABG28004.1"/>
    <property type="molecule type" value="Genomic_DNA"/>
</dbReference>
<dbReference type="EMBL" id="DQ654419">
    <property type="protein sequence ID" value="ABG28006.1"/>
    <property type="molecule type" value="Genomic_DNA"/>
</dbReference>
<dbReference type="EMBL" id="DQ654420">
    <property type="protein sequence ID" value="ABG28008.1"/>
    <property type="molecule type" value="Genomic_DNA"/>
</dbReference>
<dbReference type="EMBL" id="DQ654421">
    <property type="protein sequence ID" value="ABG28010.1"/>
    <property type="molecule type" value="Genomic_DNA"/>
</dbReference>
<dbReference type="EMBL" id="DQ654422">
    <property type="protein sequence ID" value="ABG28012.1"/>
    <property type="molecule type" value="Genomic_DNA"/>
</dbReference>
<dbReference type="EMBL" id="DQ654423">
    <property type="protein sequence ID" value="ABG28014.1"/>
    <property type="molecule type" value="Genomic_DNA"/>
</dbReference>
<dbReference type="EMBL" id="DQ654424">
    <property type="protein sequence ID" value="ABG28016.1"/>
    <property type="molecule type" value="Genomic_DNA"/>
</dbReference>
<dbReference type="EMBL" id="DQ654425">
    <property type="protein sequence ID" value="ABG28018.1"/>
    <property type="molecule type" value="Genomic_DNA"/>
</dbReference>
<dbReference type="EMBL" id="DQ654426">
    <property type="protein sequence ID" value="ABG28020.1"/>
    <property type="molecule type" value="Genomic_DNA"/>
</dbReference>
<dbReference type="EMBL" id="DQ654427">
    <property type="protein sequence ID" value="ABG28022.1"/>
    <property type="molecule type" value="Genomic_DNA"/>
</dbReference>
<dbReference type="EMBL" id="DQ654428">
    <property type="protein sequence ID" value="ABG28024.1"/>
    <property type="molecule type" value="Genomic_DNA"/>
</dbReference>
<dbReference type="EMBL" id="DQ654429">
    <property type="protein sequence ID" value="ABG28026.1"/>
    <property type="molecule type" value="Genomic_DNA"/>
</dbReference>
<dbReference type="EMBL" id="DQ654430">
    <property type="protein sequence ID" value="ABG28028.1"/>
    <property type="molecule type" value="Genomic_DNA"/>
</dbReference>
<dbReference type="EMBL" id="DQ654431">
    <property type="protein sequence ID" value="ABG28030.1"/>
    <property type="molecule type" value="Genomic_DNA"/>
</dbReference>
<dbReference type="EMBL" id="DQ654432">
    <property type="protein sequence ID" value="ABG28032.1"/>
    <property type="molecule type" value="Genomic_DNA"/>
</dbReference>
<dbReference type="EMBL" id="DQ654433">
    <property type="protein sequence ID" value="ABG28034.1"/>
    <property type="molecule type" value="Genomic_DNA"/>
</dbReference>
<dbReference type="EMBL" id="DQ654434">
    <property type="protein sequence ID" value="ABG28036.1"/>
    <property type="molecule type" value="Genomic_DNA"/>
</dbReference>
<dbReference type="EMBL" id="DQ654435">
    <property type="protein sequence ID" value="ABG28038.1"/>
    <property type="molecule type" value="Genomic_DNA"/>
</dbReference>
<dbReference type="EMBL" id="DQ654436">
    <property type="protein sequence ID" value="ABG28040.1"/>
    <property type="molecule type" value="Genomic_DNA"/>
</dbReference>
<dbReference type="EMBL" id="DQ654437">
    <property type="protein sequence ID" value="ABG28042.1"/>
    <property type="molecule type" value="Genomic_DNA"/>
</dbReference>
<dbReference type="EMBL" id="DQ654438">
    <property type="protein sequence ID" value="ABG28044.1"/>
    <property type="molecule type" value="Genomic_DNA"/>
</dbReference>
<dbReference type="EMBL" id="DQ654439">
    <property type="protein sequence ID" value="ABG28046.1"/>
    <property type="molecule type" value="Genomic_DNA"/>
</dbReference>
<dbReference type="EMBL" id="DQ654440">
    <property type="protein sequence ID" value="ABG28048.1"/>
    <property type="molecule type" value="Genomic_DNA"/>
</dbReference>
<dbReference type="EMBL" id="DQ654441">
    <property type="protein sequence ID" value="ABG28050.1"/>
    <property type="molecule type" value="Genomic_DNA"/>
</dbReference>
<dbReference type="EMBL" id="DQ654442">
    <property type="protein sequence ID" value="ABG28052.1"/>
    <property type="molecule type" value="Genomic_DNA"/>
</dbReference>
<dbReference type="EMBL" id="DQ654443">
    <property type="protein sequence ID" value="ABG28054.1"/>
    <property type="molecule type" value="Genomic_DNA"/>
</dbReference>
<dbReference type="EMBL" id="AF004341">
    <property type="protein sequence ID" value="AAB63452.1"/>
    <property type="molecule type" value="Genomic_DNA"/>
</dbReference>
<dbReference type="PIR" id="A00482">
    <property type="entry name" value="OTHU3"/>
</dbReference>
<dbReference type="RefSeq" id="YP_003024032.1">
    <property type="nucleotide sequence ID" value="NC_012920.1"/>
</dbReference>
<dbReference type="PDB" id="5Z62">
    <property type="method" value="EM"/>
    <property type="resolution" value="3.60 A"/>
    <property type="chains" value="C=2-261"/>
</dbReference>
<dbReference type="PDBsum" id="5Z62"/>
<dbReference type="SMR" id="P00414"/>
<dbReference type="BioGRID" id="110617">
    <property type="interactions" value="39"/>
</dbReference>
<dbReference type="ComplexPortal" id="CPX-6123">
    <property type="entry name" value="Mitochondrial respiratory chain complex IV"/>
</dbReference>
<dbReference type="CORUM" id="P00414"/>
<dbReference type="FunCoup" id="P00414">
    <property type="interactions" value="222"/>
</dbReference>
<dbReference type="IntAct" id="P00414">
    <property type="interactions" value="16"/>
</dbReference>
<dbReference type="MINT" id="P00414"/>
<dbReference type="STRING" id="9606.ENSP00000354982"/>
<dbReference type="DrugBank" id="DB02659">
    <property type="generic name" value="Cholic Acid"/>
</dbReference>
<dbReference type="DrugBank" id="DB04464">
    <property type="generic name" value="N-Formylmethionine"/>
</dbReference>
<dbReference type="TCDB" id="3.D.4.11.1">
    <property type="family name" value="the proton-translocating cytochrome oxidase (cox) superfamily"/>
</dbReference>
<dbReference type="GlyGen" id="P00414">
    <property type="glycosylation" value="1 site"/>
</dbReference>
<dbReference type="iPTMnet" id="P00414"/>
<dbReference type="PhosphoSitePlus" id="P00414"/>
<dbReference type="SwissPalm" id="P00414"/>
<dbReference type="BioMuta" id="MT-CO3"/>
<dbReference type="DMDM" id="6648058"/>
<dbReference type="jPOST" id="P00414"/>
<dbReference type="MassIVE" id="P00414"/>
<dbReference type="PaxDb" id="9606-ENSP00000354982"/>
<dbReference type="PeptideAtlas" id="P00414"/>
<dbReference type="ProteomicsDB" id="51248"/>
<dbReference type="Pumba" id="P00414"/>
<dbReference type="TopDownProteomics" id="P00414"/>
<dbReference type="Antibodypedia" id="35359">
    <property type="antibodies" value="137 antibodies from 24 providers"/>
</dbReference>
<dbReference type="DNASU" id="4514"/>
<dbReference type="Ensembl" id="ENST00000362079.2">
    <property type="protein sequence ID" value="ENSP00000354982.2"/>
    <property type="gene ID" value="ENSG00000198938.2"/>
</dbReference>
<dbReference type="GeneID" id="4514"/>
<dbReference type="KEGG" id="hsa:4514"/>
<dbReference type="AGR" id="HGNC:7422"/>
<dbReference type="CTD" id="4514"/>
<dbReference type="DisGeNET" id="4514"/>
<dbReference type="GeneCards" id="MT-CO3"/>
<dbReference type="GeneReviews" id="MT-CO3"/>
<dbReference type="HGNC" id="HGNC:7422">
    <property type="gene designation" value="MT-CO3"/>
</dbReference>
<dbReference type="HPA" id="ENSG00000198938">
    <property type="expression patterns" value="Tissue enhanced (heart)"/>
</dbReference>
<dbReference type="MalaCards" id="MT-CO3"/>
<dbReference type="MIM" id="220110">
    <property type="type" value="phenotype"/>
</dbReference>
<dbReference type="MIM" id="516050">
    <property type="type" value="gene"/>
</dbReference>
<dbReference type="MIM" id="535000">
    <property type="type" value="phenotype"/>
</dbReference>
<dbReference type="MIM" id="550500">
    <property type="type" value="phenotype"/>
</dbReference>
<dbReference type="neXtProt" id="NX_P00414"/>
<dbReference type="OpenTargets" id="ENSG00000198938"/>
<dbReference type="Orphanet" id="99845">
    <property type="disease" value="Genetic recurrent myoglobinuria"/>
</dbReference>
<dbReference type="Orphanet" id="254905">
    <property type="disease" value="Isolated cytochrome C oxidase deficiency"/>
</dbReference>
<dbReference type="Orphanet" id="104">
    <property type="disease" value="Leber hereditary optic neuropathy"/>
</dbReference>
<dbReference type="Orphanet" id="550">
    <property type="disease" value="MELAS"/>
</dbReference>
<dbReference type="VEuPathDB" id="HostDB:ENSG00000198938"/>
<dbReference type="eggNOG" id="KOG4664">
    <property type="taxonomic scope" value="Eukaryota"/>
</dbReference>
<dbReference type="GeneTree" id="ENSGT00390000013064"/>
<dbReference type="HOGENOM" id="CLU_044071_0_0_1"/>
<dbReference type="InParanoid" id="P00414"/>
<dbReference type="OMA" id="SIYWWGS"/>
<dbReference type="PAN-GO" id="P00414">
    <property type="GO annotations" value="4 GO annotations based on evolutionary models"/>
</dbReference>
<dbReference type="PhylomeDB" id="P00414"/>
<dbReference type="TreeFam" id="TF343435"/>
<dbReference type="BioCyc" id="MetaCyc:HS00028-MONOMER"/>
<dbReference type="PathwayCommons" id="P00414"/>
<dbReference type="Reactome" id="R-HSA-5628897">
    <property type="pathway name" value="TP53 Regulates Metabolic Genes"/>
</dbReference>
<dbReference type="Reactome" id="R-HSA-611105">
    <property type="pathway name" value="Respiratory electron transport"/>
</dbReference>
<dbReference type="Reactome" id="R-HSA-9707564">
    <property type="pathway name" value="Cytoprotection by HMOX1"/>
</dbReference>
<dbReference type="Reactome" id="R-HSA-9864848">
    <property type="pathway name" value="Complex IV assembly"/>
</dbReference>
<dbReference type="SignaLink" id="P00414"/>
<dbReference type="SIGNOR" id="P00414"/>
<dbReference type="BioGRID-ORCS" id="4514">
    <property type="hits" value="0 hits in 2 CRISPR screens"/>
</dbReference>
<dbReference type="ChiTaRS" id="COX3">
    <property type="organism name" value="human"/>
</dbReference>
<dbReference type="GeneWiki" id="MT-CO3"/>
<dbReference type="GenomeRNAi" id="4514"/>
<dbReference type="Pharos" id="P00414">
    <property type="development level" value="Tbio"/>
</dbReference>
<dbReference type="PRO" id="PR:P00414"/>
<dbReference type="Proteomes" id="UP000005640">
    <property type="component" value="Mitochondrion MT"/>
</dbReference>
<dbReference type="RNAct" id="P00414">
    <property type="molecule type" value="protein"/>
</dbReference>
<dbReference type="Bgee" id="ENSG00000198938">
    <property type="expression patterns" value="Expressed in mucosa of stomach and 96 other cell types or tissues"/>
</dbReference>
<dbReference type="ExpressionAtlas" id="P00414">
    <property type="expression patterns" value="baseline and differential"/>
</dbReference>
<dbReference type="GO" id="GO:0005743">
    <property type="term" value="C:mitochondrial inner membrane"/>
    <property type="evidence" value="ECO:0000304"/>
    <property type="project" value="Reactome"/>
</dbReference>
<dbReference type="GO" id="GO:0031966">
    <property type="term" value="C:mitochondrial membrane"/>
    <property type="evidence" value="ECO:0000314"/>
    <property type="project" value="ComplexPortal"/>
</dbReference>
<dbReference type="GO" id="GO:0005739">
    <property type="term" value="C:mitochondrion"/>
    <property type="evidence" value="ECO:0006056"/>
    <property type="project" value="FlyBase"/>
</dbReference>
<dbReference type="GO" id="GO:0045277">
    <property type="term" value="C:respiratory chain complex IV"/>
    <property type="evidence" value="ECO:0000314"/>
    <property type="project" value="UniProtKB"/>
</dbReference>
<dbReference type="GO" id="GO:0004129">
    <property type="term" value="F:cytochrome-c oxidase activity"/>
    <property type="evidence" value="ECO:0007669"/>
    <property type="project" value="UniProtKB-EC"/>
</dbReference>
<dbReference type="GO" id="GO:0045333">
    <property type="term" value="P:cellular respiration"/>
    <property type="evidence" value="ECO:0000303"/>
    <property type="project" value="ComplexPortal"/>
</dbReference>
<dbReference type="GO" id="GO:0006123">
    <property type="term" value="P:mitochondrial electron transport, cytochrome c to oxygen"/>
    <property type="evidence" value="ECO:0000318"/>
    <property type="project" value="GO_Central"/>
</dbReference>
<dbReference type="GO" id="GO:0008535">
    <property type="term" value="P:respiratory chain complex IV assembly"/>
    <property type="evidence" value="ECO:0000315"/>
    <property type="project" value="UniProtKB"/>
</dbReference>
<dbReference type="CDD" id="cd01665">
    <property type="entry name" value="Cyt_c_Oxidase_III"/>
    <property type="match status" value="1"/>
</dbReference>
<dbReference type="FunFam" id="1.10.287.70:FF:000048">
    <property type="entry name" value="Cytochrome c oxidase subunit 3"/>
    <property type="match status" value="1"/>
</dbReference>
<dbReference type="FunFam" id="1.20.120.80:FF:000002">
    <property type="entry name" value="Cytochrome c oxidase subunit 3"/>
    <property type="match status" value="1"/>
</dbReference>
<dbReference type="Gene3D" id="1.10.287.70">
    <property type="match status" value="1"/>
</dbReference>
<dbReference type="Gene3D" id="1.20.120.80">
    <property type="entry name" value="Cytochrome c oxidase, subunit III, four-helix bundle"/>
    <property type="match status" value="1"/>
</dbReference>
<dbReference type="InterPro" id="IPR024791">
    <property type="entry name" value="Cyt_c/ubiquinol_Oxase_su3"/>
</dbReference>
<dbReference type="InterPro" id="IPR033945">
    <property type="entry name" value="Cyt_c_oxase_su3_dom"/>
</dbReference>
<dbReference type="InterPro" id="IPR000298">
    <property type="entry name" value="Cyt_c_oxidase-like_su3"/>
</dbReference>
<dbReference type="InterPro" id="IPR035973">
    <property type="entry name" value="Cyt_c_oxidase_su3-like_sf"/>
</dbReference>
<dbReference type="InterPro" id="IPR013833">
    <property type="entry name" value="Cyt_c_oxidase_su3_a-hlx"/>
</dbReference>
<dbReference type="PANTHER" id="PTHR11403:SF7">
    <property type="entry name" value="CYTOCHROME C OXIDASE SUBUNIT 3"/>
    <property type="match status" value="1"/>
</dbReference>
<dbReference type="PANTHER" id="PTHR11403">
    <property type="entry name" value="CYTOCHROME C OXIDASE SUBUNIT III"/>
    <property type="match status" value="1"/>
</dbReference>
<dbReference type="Pfam" id="PF00510">
    <property type="entry name" value="COX3"/>
    <property type="match status" value="1"/>
</dbReference>
<dbReference type="SUPFAM" id="SSF81452">
    <property type="entry name" value="Cytochrome c oxidase subunit III-like"/>
    <property type="match status" value="1"/>
</dbReference>
<dbReference type="PROSITE" id="PS50253">
    <property type="entry name" value="COX3"/>
    <property type="match status" value="1"/>
</dbReference>
<gene>
    <name type="primary">MT-CO3</name>
    <name type="synonym">COIII</name>
    <name type="synonym">COXIII</name>
    <name type="synonym">MTCO3</name>
</gene>